<dbReference type="EMBL" id="CP000458">
    <property type="protein sequence ID" value="ABK07503.1"/>
    <property type="molecule type" value="Genomic_DNA"/>
</dbReference>
<dbReference type="RefSeq" id="WP_006476840.1">
    <property type="nucleotide sequence ID" value="NC_008542.1"/>
</dbReference>
<dbReference type="SMR" id="A0K4S6"/>
<dbReference type="GeneID" id="83047517"/>
<dbReference type="KEGG" id="bch:Bcen2424_0750"/>
<dbReference type="HOGENOM" id="CLU_057217_6_1_4"/>
<dbReference type="GO" id="GO:0005829">
    <property type="term" value="C:cytosol"/>
    <property type="evidence" value="ECO:0007669"/>
    <property type="project" value="TreeGrafter"/>
</dbReference>
<dbReference type="GO" id="GO:0000774">
    <property type="term" value="F:adenyl-nucleotide exchange factor activity"/>
    <property type="evidence" value="ECO:0007669"/>
    <property type="project" value="InterPro"/>
</dbReference>
<dbReference type="GO" id="GO:0042803">
    <property type="term" value="F:protein homodimerization activity"/>
    <property type="evidence" value="ECO:0007669"/>
    <property type="project" value="InterPro"/>
</dbReference>
<dbReference type="GO" id="GO:0051087">
    <property type="term" value="F:protein-folding chaperone binding"/>
    <property type="evidence" value="ECO:0007669"/>
    <property type="project" value="InterPro"/>
</dbReference>
<dbReference type="GO" id="GO:0051082">
    <property type="term" value="F:unfolded protein binding"/>
    <property type="evidence" value="ECO:0007669"/>
    <property type="project" value="TreeGrafter"/>
</dbReference>
<dbReference type="GO" id="GO:0006457">
    <property type="term" value="P:protein folding"/>
    <property type="evidence" value="ECO:0007669"/>
    <property type="project" value="InterPro"/>
</dbReference>
<dbReference type="CDD" id="cd00446">
    <property type="entry name" value="GrpE"/>
    <property type="match status" value="1"/>
</dbReference>
<dbReference type="FunFam" id="2.30.22.10:FF:000001">
    <property type="entry name" value="Protein GrpE"/>
    <property type="match status" value="1"/>
</dbReference>
<dbReference type="Gene3D" id="3.90.20.20">
    <property type="match status" value="1"/>
</dbReference>
<dbReference type="Gene3D" id="2.30.22.10">
    <property type="entry name" value="Head domain of nucleotide exchange factor GrpE"/>
    <property type="match status" value="1"/>
</dbReference>
<dbReference type="HAMAP" id="MF_01151">
    <property type="entry name" value="GrpE"/>
    <property type="match status" value="1"/>
</dbReference>
<dbReference type="InterPro" id="IPR000740">
    <property type="entry name" value="GrpE"/>
</dbReference>
<dbReference type="InterPro" id="IPR013805">
    <property type="entry name" value="GrpE_coiled_coil"/>
</dbReference>
<dbReference type="InterPro" id="IPR009012">
    <property type="entry name" value="GrpE_head"/>
</dbReference>
<dbReference type="NCBIfam" id="NF010737">
    <property type="entry name" value="PRK14139.1"/>
    <property type="match status" value="1"/>
</dbReference>
<dbReference type="NCBIfam" id="NF010738">
    <property type="entry name" value="PRK14140.1"/>
    <property type="match status" value="1"/>
</dbReference>
<dbReference type="NCBIfam" id="NF010748">
    <property type="entry name" value="PRK14150.1"/>
    <property type="match status" value="1"/>
</dbReference>
<dbReference type="PANTHER" id="PTHR21237">
    <property type="entry name" value="GRPE PROTEIN"/>
    <property type="match status" value="1"/>
</dbReference>
<dbReference type="PANTHER" id="PTHR21237:SF23">
    <property type="entry name" value="GRPE PROTEIN HOMOLOG, MITOCHONDRIAL"/>
    <property type="match status" value="1"/>
</dbReference>
<dbReference type="Pfam" id="PF01025">
    <property type="entry name" value="GrpE"/>
    <property type="match status" value="1"/>
</dbReference>
<dbReference type="PRINTS" id="PR00773">
    <property type="entry name" value="GRPEPROTEIN"/>
</dbReference>
<dbReference type="SUPFAM" id="SSF58014">
    <property type="entry name" value="Coiled-coil domain of nucleotide exchange factor GrpE"/>
    <property type="match status" value="1"/>
</dbReference>
<dbReference type="SUPFAM" id="SSF51064">
    <property type="entry name" value="Head domain of nucleotide exchange factor GrpE"/>
    <property type="match status" value="1"/>
</dbReference>
<dbReference type="PROSITE" id="PS01071">
    <property type="entry name" value="GRPE"/>
    <property type="match status" value="1"/>
</dbReference>
<name>GRPE_BURCH</name>
<evidence type="ECO:0000255" key="1">
    <source>
        <dbReference type="HAMAP-Rule" id="MF_01151"/>
    </source>
</evidence>
<evidence type="ECO:0000256" key="2">
    <source>
        <dbReference type="SAM" id="MobiDB-lite"/>
    </source>
</evidence>
<keyword id="KW-0143">Chaperone</keyword>
<keyword id="KW-0963">Cytoplasm</keyword>
<keyword id="KW-0346">Stress response</keyword>
<gene>
    <name evidence="1" type="primary">grpE</name>
    <name type="ordered locus">Bcen2424_0750</name>
</gene>
<feature type="chain" id="PRO_1000053551" description="Protein GrpE">
    <location>
        <begin position="1"/>
        <end position="181"/>
    </location>
</feature>
<feature type="region of interest" description="Disordered" evidence="2">
    <location>
        <begin position="1"/>
        <end position="33"/>
    </location>
</feature>
<feature type="compositionally biased region" description="Polar residues" evidence="2">
    <location>
        <begin position="1"/>
        <end position="12"/>
    </location>
</feature>
<feature type="compositionally biased region" description="Low complexity" evidence="2">
    <location>
        <begin position="21"/>
        <end position="33"/>
    </location>
</feature>
<protein>
    <recommendedName>
        <fullName evidence="1">Protein GrpE</fullName>
    </recommendedName>
    <alternativeName>
        <fullName evidence="1">HSP-70 cofactor</fullName>
    </alternativeName>
</protein>
<accession>A0K4S6</accession>
<sequence length="181" mass="19398">MENTQENPTTPSAEDIGSEKQAAQGAAPAAEAADAALAEAQAKVAELQESFLRAKAETENVRRRAQDDVSKAHKFAIESFAEHLLPVLDSLEAAVNDTSGDIAKVREGVELTLRQLTSALEKGRVVAINPIGEKFDPHQHQAISMVPAEQEPNTVVSVLQKGYTIADRVLRPALVTVAQPK</sequence>
<proteinExistence type="inferred from homology"/>
<reference key="1">
    <citation type="submission" date="2006-08" db="EMBL/GenBank/DDBJ databases">
        <title>Complete sequence of chromosome 1 of Burkholderia cenocepacia HI2424.</title>
        <authorList>
            <person name="Copeland A."/>
            <person name="Lucas S."/>
            <person name="Lapidus A."/>
            <person name="Barry K."/>
            <person name="Detter J.C."/>
            <person name="Glavina del Rio T."/>
            <person name="Hammon N."/>
            <person name="Israni S."/>
            <person name="Pitluck S."/>
            <person name="Chain P."/>
            <person name="Malfatti S."/>
            <person name="Shin M."/>
            <person name="Vergez L."/>
            <person name="Schmutz J."/>
            <person name="Larimer F."/>
            <person name="Land M."/>
            <person name="Hauser L."/>
            <person name="Kyrpides N."/>
            <person name="Kim E."/>
            <person name="LiPuma J.J."/>
            <person name="Gonzalez C.F."/>
            <person name="Konstantinidis K."/>
            <person name="Tiedje J.M."/>
            <person name="Richardson P."/>
        </authorList>
    </citation>
    <scope>NUCLEOTIDE SEQUENCE [LARGE SCALE GENOMIC DNA]</scope>
    <source>
        <strain>HI2424</strain>
    </source>
</reference>
<organism>
    <name type="scientific">Burkholderia cenocepacia (strain HI2424)</name>
    <dbReference type="NCBI Taxonomy" id="331272"/>
    <lineage>
        <taxon>Bacteria</taxon>
        <taxon>Pseudomonadati</taxon>
        <taxon>Pseudomonadota</taxon>
        <taxon>Betaproteobacteria</taxon>
        <taxon>Burkholderiales</taxon>
        <taxon>Burkholderiaceae</taxon>
        <taxon>Burkholderia</taxon>
        <taxon>Burkholderia cepacia complex</taxon>
    </lineage>
</organism>
<comment type="function">
    <text evidence="1">Participates actively in the response to hyperosmotic and heat shock by preventing the aggregation of stress-denatured proteins, in association with DnaK and GrpE. It is the nucleotide exchange factor for DnaK and may function as a thermosensor. Unfolded proteins bind initially to DnaJ; upon interaction with the DnaJ-bound protein, DnaK hydrolyzes its bound ATP, resulting in the formation of a stable complex. GrpE releases ADP from DnaK; ATP binding to DnaK triggers the release of the substrate protein, thus completing the reaction cycle. Several rounds of ATP-dependent interactions between DnaJ, DnaK and GrpE are required for fully efficient folding.</text>
</comment>
<comment type="subunit">
    <text evidence="1">Homodimer.</text>
</comment>
<comment type="subcellular location">
    <subcellularLocation>
        <location evidence="1">Cytoplasm</location>
    </subcellularLocation>
</comment>
<comment type="similarity">
    <text evidence="1">Belongs to the GrpE family.</text>
</comment>